<reference key="1">
    <citation type="journal article" date="1999" name="J. Biol. Chem.">
        <title>Purification, cDNA cloning, and expression of a new human blood plasma glutamate carboxypeptidase homologous to N-acetyl-aspartyl-alpha-glutamate carboxypeptidase/prostate-specific membrane antigen.</title>
        <authorList>
            <person name="Gingras R."/>
            <person name="Richard C."/>
            <person name="El-Alfy M."/>
            <person name="Morales C.R."/>
            <person name="Potier M."/>
            <person name="Pshezhetsky A.V."/>
        </authorList>
    </citation>
    <scope>NUCLEOTIDE SEQUENCE [MRNA]</scope>
    <scope>PROTEIN SEQUENCE OF 45-75</scope>
    <scope>ENZYME ACTIVITY</scope>
    <scope>SUBCELLULAR LOCATION</scope>
    <scope>TISSUE SPECIFICITY</scope>
    <scope>GLYCOSYLATION</scope>
</reference>
<reference key="2">
    <citation type="submission" date="1998-11" db="EMBL/GenBank/DDBJ databases">
        <title>Cloning of the human aminopeptidase gene.</title>
        <authorList>
            <person name="Liu C.H."/>
            <person name="Lin B.Y."/>
            <person name="Chang L.Y."/>
        </authorList>
    </citation>
    <scope>NUCLEOTIDE SEQUENCE [MRNA]</scope>
    <source>
        <tissue>Liver</tissue>
    </source>
</reference>
<reference key="3">
    <citation type="journal article" date="2004" name="Nat. Genet.">
        <title>Complete sequencing and characterization of 21,243 full-length human cDNAs.</title>
        <authorList>
            <person name="Ota T."/>
            <person name="Suzuki Y."/>
            <person name="Nishikawa T."/>
            <person name="Otsuki T."/>
            <person name="Sugiyama T."/>
            <person name="Irie R."/>
            <person name="Wakamatsu A."/>
            <person name="Hayashi K."/>
            <person name="Sato H."/>
            <person name="Nagai K."/>
            <person name="Kimura K."/>
            <person name="Makita H."/>
            <person name="Sekine M."/>
            <person name="Obayashi M."/>
            <person name="Nishi T."/>
            <person name="Shibahara T."/>
            <person name="Tanaka T."/>
            <person name="Ishii S."/>
            <person name="Yamamoto J."/>
            <person name="Saito K."/>
            <person name="Kawai Y."/>
            <person name="Isono Y."/>
            <person name="Nakamura Y."/>
            <person name="Nagahari K."/>
            <person name="Murakami K."/>
            <person name="Yasuda T."/>
            <person name="Iwayanagi T."/>
            <person name="Wagatsuma M."/>
            <person name="Shiratori A."/>
            <person name="Sudo H."/>
            <person name="Hosoiri T."/>
            <person name="Kaku Y."/>
            <person name="Kodaira H."/>
            <person name="Kondo H."/>
            <person name="Sugawara M."/>
            <person name="Takahashi M."/>
            <person name="Kanda K."/>
            <person name="Yokoi T."/>
            <person name="Furuya T."/>
            <person name="Kikkawa E."/>
            <person name="Omura Y."/>
            <person name="Abe K."/>
            <person name="Kamihara K."/>
            <person name="Katsuta N."/>
            <person name="Sato K."/>
            <person name="Tanikawa M."/>
            <person name="Yamazaki M."/>
            <person name="Ninomiya K."/>
            <person name="Ishibashi T."/>
            <person name="Yamashita H."/>
            <person name="Murakawa K."/>
            <person name="Fujimori K."/>
            <person name="Tanai H."/>
            <person name="Kimata M."/>
            <person name="Watanabe M."/>
            <person name="Hiraoka S."/>
            <person name="Chiba Y."/>
            <person name="Ishida S."/>
            <person name="Ono Y."/>
            <person name="Takiguchi S."/>
            <person name="Watanabe S."/>
            <person name="Yosida M."/>
            <person name="Hotuta T."/>
            <person name="Kusano J."/>
            <person name="Kanehori K."/>
            <person name="Takahashi-Fujii A."/>
            <person name="Hara H."/>
            <person name="Tanase T.-O."/>
            <person name="Nomura Y."/>
            <person name="Togiya S."/>
            <person name="Komai F."/>
            <person name="Hara R."/>
            <person name="Takeuchi K."/>
            <person name="Arita M."/>
            <person name="Imose N."/>
            <person name="Musashino K."/>
            <person name="Yuuki H."/>
            <person name="Oshima A."/>
            <person name="Sasaki N."/>
            <person name="Aotsuka S."/>
            <person name="Yoshikawa Y."/>
            <person name="Matsunawa H."/>
            <person name="Ichihara T."/>
            <person name="Shiohata N."/>
            <person name="Sano S."/>
            <person name="Moriya S."/>
            <person name="Momiyama H."/>
            <person name="Satoh N."/>
            <person name="Takami S."/>
            <person name="Terashima Y."/>
            <person name="Suzuki O."/>
            <person name="Nakagawa S."/>
            <person name="Senoh A."/>
            <person name="Mizoguchi H."/>
            <person name="Goto Y."/>
            <person name="Shimizu F."/>
            <person name="Wakebe H."/>
            <person name="Hishigaki H."/>
            <person name="Watanabe T."/>
            <person name="Sugiyama A."/>
            <person name="Takemoto M."/>
            <person name="Kawakami B."/>
            <person name="Yamazaki M."/>
            <person name="Watanabe K."/>
            <person name="Kumagai A."/>
            <person name="Itakura S."/>
            <person name="Fukuzumi Y."/>
            <person name="Fujimori Y."/>
            <person name="Komiyama M."/>
            <person name="Tashiro H."/>
            <person name="Tanigami A."/>
            <person name="Fujiwara T."/>
            <person name="Ono T."/>
            <person name="Yamada K."/>
            <person name="Fujii Y."/>
            <person name="Ozaki K."/>
            <person name="Hirao M."/>
            <person name="Ohmori Y."/>
            <person name="Kawabata A."/>
            <person name="Hikiji T."/>
            <person name="Kobatake N."/>
            <person name="Inagaki H."/>
            <person name="Ikema Y."/>
            <person name="Okamoto S."/>
            <person name="Okitani R."/>
            <person name="Kawakami T."/>
            <person name="Noguchi S."/>
            <person name="Itoh T."/>
            <person name="Shigeta K."/>
            <person name="Senba T."/>
            <person name="Matsumura K."/>
            <person name="Nakajima Y."/>
            <person name="Mizuno T."/>
            <person name="Morinaga M."/>
            <person name="Sasaki M."/>
            <person name="Togashi T."/>
            <person name="Oyama M."/>
            <person name="Hata H."/>
            <person name="Watanabe M."/>
            <person name="Komatsu T."/>
            <person name="Mizushima-Sugano J."/>
            <person name="Satoh T."/>
            <person name="Shirai Y."/>
            <person name="Takahashi Y."/>
            <person name="Nakagawa K."/>
            <person name="Okumura K."/>
            <person name="Nagase T."/>
            <person name="Nomura N."/>
            <person name="Kikuchi H."/>
            <person name="Masuho Y."/>
            <person name="Yamashita R."/>
            <person name="Nakai K."/>
            <person name="Yada T."/>
            <person name="Nakamura Y."/>
            <person name="Ohara O."/>
            <person name="Isogai T."/>
            <person name="Sugano S."/>
        </authorList>
    </citation>
    <scope>NUCLEOTIDE SEQUENCE [LARGE SCALE MRNA]</scope>
    <source>
        <tissue>Heart</tissue>
    </source>
</reference>
<reference key="4">
    <citation type="journal article" date="2005" name="DNA Res.">
        <title>Signal sequence and keyword trap in silico for selection of full-length human cDNAs encoding secretion or membrane proteins from oligo-capped cDNA libraries.</title>
        <authorList>
            <person name="Otsuki T."/>
            <person name="Ota T."/>
            <person name="Nishikawa T."/>
            <person name="Hayashi K."/>
            <person name="Suzuki Y."/>
            <person name="Yamamoto J."/>
            <person name="Wakamatsu A."/>
            <person name="Kimura K."/>
            <person name="Sakamoto K."/>
            <person name="Hatano N."/>
            <person name="Kawai Y."/>
            <person name="Ishii S."/>
            <person name="Saito K."/>
            <person name="Kojima S."/>
            <person name="Sugiyama T."/>
            <person name="Ono T."/>
            <person name="Okano K."/>
            <person name="Yoshikawa Y."/>
            <person name="Aotsuka S."/>
            <person name="Sasaki N."/>
            <person name="Hattori A."/>
            <person name="Okumura K."/>
            <person name="Nagai K."/>
            <person name="Sugano S."/>
            <person name="Isogai T."/>
        </authorList>
    </citation>
    <scope>NUCLEOTIDE SEQUENCE [LARGE SCALE MRNA]</scope>
    <source>
        <tissue>Placenta</tissue>
    </source>
</reference>
<reference key="5">
    <citation type="submission" date="2005-09" db="EMBL/GenBank/DDBJ databases">
        <authorList>
            <person name="Mural R.J."/>
            <person name="Istrail S."/>
            <person name="Sutton G.G."/>
            <person name="Florea L."/>
            <person name="Halpern A.L."/>
            <person name="Mobarry C.M."/>
            <person name="Lippert R."/>
            <person name="Walenz B."/>
            <person name="Shatkay H."/>
            <person name="Dew I."/>
            <person name="Miller J.R."/>
            <person name="Flanigan M.J."/>
            <person name="Edwards N.J."/>
            <person name="Bolanos R."/>
            <person name="Fasulo D."/>
            <person name="Halldorsson B.V."/>
            <person name="Hannenhalli S."/>
            <person name="Turner R."/>
            <person name="Yooseph S."/>
            <person name="Lu F."/>
            <person name="Nusskern D.R."/>
            <person name="Shue B.C."/>
            <person name="Zheng X.H."/>
            <person name="Zhong F."/>
            <person name="Delcher A.L."/>
            <person name="Huson D.H."/>
            <person name="Kravitz S.A."/>
            <person name="Mouchard L."/>
            <person name="Reinert K."/>
            <person name="Remington K.A."/>
            <person name="Clark A.G."/>
            <person name="Waterman M.S."/>
            <person name="Eichler E.E."/>
            <person name="Adams M.D."/>
            <person name="Hunkapiller M.W."/>
            <person name="Myers E.W."/>
            <person name="Venter J.C."/>
        </authorList>
    </citation>
    <scope>NUCLEOTIDE SEQUENCE [LARGE SCALE GENOMIC DNA]</scope>
</reference>
<reference key="6">
    <citation type="journal article" date="2004" name="Genome Res.">
        <title>The status, quality, and expansion of the NIH full-length cDNA project: the Mammalian Gene Collection (MGC).</title>
        <authorList>
            <consortium name="The MGC Project Team"/>
        </authorList>
    </citation>
    <scope>NUCLEOTIDE SEQUENCE [LARGE SCALE MRNA]</scope>
    <source>
        <tissue>Skin</tissue>
    </source>
</reference>
<reference key="7">
    <citation type="journal article" date="2003" name="Biol. Chem.">
        <title>Purification and primary structure determination of human lysosomal dipeptidase.</title>
        <authorList>
            <person name="Dolenc I."/>
            <person name="Mihelic M."/>
        </authorList>
    </citation>
    <scope>PROTEIN SEQUENCE OF 45-74</scope>
    <scope>HOMODIMERIZATION</scope>
</reference>
<reference key="8">
    <citation type="journal article" date="2003" name="Cancer Res.">
        <title>Identification of novel tumor markers in hepatitis C virus-associated hepatocellular carcinoma.</title>
        <authorList>
            <person name="Smith M.W."/>
            <person name="Yue Z.N."/>
            <person name="Geiss G.K."/>
            <person name="Sadovnikova N.Y."/>
            <person name="Carter V.S."/>
            <person name="Boix L."/>
            <person name="Lazaro C.A."/>
            <person name="Rosenberg G.B."/>
            <person name="Bumgarner R.E."/>
            <person name="Fausto N."/>
            <person name="Bruix J."/>
            <person name="Katze M.G."/>
        </authorList>
    </citation>
    <scope>INDUCTION</scope>
</reference>
<reference key="9">
    <citation type="journal article" date="2005" name="J. Proteome Res.">
        <title>Human plasma N-glycoproteome analysis by immunoaffinity subtraction, hydrazide chemistry, and mass spectrometry.</title>
        <authorList>
            <person name="Liu T."/>
            <person name="Qian W.-J."/>
            <person name="Gritsenko M.A."/>
            <person name="Camp D.G. II"/>
            <person name="Monroe M.E."/>
            <person name="Moore R.J."/>
            <person name="Smith R.D."/>
        </authorList>
    </citation>
    <scope>GLYCOSYLATION [LARGE SCALE ANALYSIS] AT ASN-179; ASN-353 AND ASN-356</scope>
    <source>
        <tissue>Plasma</tissue>
    </source>
</reference>
<reference key="10">
    <citation type="journal article" date="2007" name="Biol. Chem.">
        <title>Presence of the propeptide on recombinant lysosomal dipeptidase controls both activation and dimerization.</title>
        <authorList>
            <person name="Dolenc I."/>
            <person name="Pain R."/>
            <person name="Turk V."/>
        </authorList>
    </citation>
    <scope>HOMODIMERIZATION</scope>
</reference>
<reference key="11">
    <citation type="journal article" date="2009" name="J. Proteome Res.">
        <title>Glycoproteomics analysis of human liver tissue by combination of multiple enzyme digestion and hydrazide chemistry.</title>
        <authorList>
            <person name="Chen R."/>
            <person name="Jiang X."/>
            <person name="Sun D."/>
            <person name="Han G."/>
            <person name="Wang F."/>
            <person name="Ye M."/>
            <person name="Wang L."/>
            <person name="Zou H."/>
        </authorList>
    </citation>
    <scope>GLYCOSYLATION [LARGE SCALE ANALYSIS] AT ASN-179</scope>
    <source>
        <tissue>Liver</tissue>
    </source>
</reference>
<gene>
    <name type="primary">CPQ</name>
    <name type="synonym">LCH1</name>
    <name type="synonym">PGCP</name>
</gene>
<sequence>MKFLIFAFFGGVHLLSLCSGKAICKNGISKRTFEEIKEEIASCGDVAKAIINLAVYGKAQNRSYERLALLVDTVGPRLSGSKNLEKAIQIMYQNLQQDGLEKVHLEPVRIPHWERGEESAVMLEPRIHKIAILGLGSSIGTPPEGITAEVLVVTSFDELQRRASEARGKIVVYNQPYINYSRTVQYRTQGAVEAAKVGALASLIRSVASFSIYSPHTGIQEYQDGVPKIPTACITVEDAEMMSRMASHGIKIVIQLKMGAKTYPDTDSFNTVAEITGSKYPEQVVLVSGHLDSWDVGQGAMDDGGGAFISWEALSLIKDLGLRPKRTLRLVLWTAEEQGGVGAFQYYQLHKVNISNYSLVMESDAGTFLPTGLQFTGSEKARAIMEEVMSLLQPLNITQVLSHGEGTDINFWIQAGVPGASLLDDLYKYFFFHHSHGDTMTVMDPKQMNVAAAVWAVVSYVVADMEEMLPRS</sequence>
<organism>
    <name type="scientific">Homo sapiens</name>
    <name type="common">Human</name>
    <dbReference type="NCBI Taxonomy" id="9606"/>
    <lineage>
        <taxon>Eukaryota</taxon>
        <taxon>Metazoa</taxon>
        <taxon>Chordata</taxon>
        <taxon>Craniata</taxon>
        <taxon>Vertebrata</taxon>
        <taxon>Euteleostomi</taxon>
        <taxon>Mammalia</taxon>
        <taxon>Eutheria</taxon>
        <taxon>Euarchontoglires</taxon>
        <taxon>Primates</taxon>
        <taxon>Haplorrhini</taxon>
        <taxon>Catarrhini</taxon>
        <taxon>Hominidae</taxon>
        <taxon>Homo</taxon>
    </lineage>
</organism>
<keyword id="KW-0121">Carboxypeptidase</keyword>
<keyword id="KW-0903">Direct protein sequencing</keyword>
<keyword id="KW-0256">Endoplasmic reticulum</keyword>
<keyword id="KW-0325">Glycoprotein</keyword>
<keyword id="KW-0333">Golgi apparatus</keyword>
<keyword id="KW-0378">Hydrolase</keyword>
<keyword id="KW-0458">Lysosome</keyword>
<keyword id="KW-0479">Metal-binding</keyword>
<keyword id="KW-0482">Metalloprotease</keyword>
<keyword id="KW-0645">Protease</keyword>
<keyword id="KW-1267">Proteomics identification</keyword>
<keyword id="KW-1185">Reference proteome</keyword>
<keyword id="KW-0964">Secreted</keyword>
<keyword id="KW-0732">Signal</keyword>
<keyword id="KW-0862">Zinc</keyword>
<keyword id="KW-0865">Zymogen</keyword>
<name>CBPQ_HUMAN</name>
<protein>
    <recommendedName>
        <fullName>Carboxypeptidase Q</fullName>
        <ecNumber>3.4.17.-</ecNumber>
    </recommendedName>
    <alternativeName>
        <fullName>Lysosomal dipeptidase</fullName>
    </alternativeName>
    <alternativeName>
        <fullName>Plasma glutamate carboxypeptidase</fullName>
    </alternativeName>
</protein>
<comment type="function">
    <text>Carboxypeptidase that may play an important role in the hydrolysis of circulating peptides. Catalyzes the hydrolysis of dipeptides with unsubstituted terminals into amino acids. May play a role in the liberation of thyroxine hormone from its thyroglobulin (Tg) precursor.</text>
</comment>
<comment type="subunit">
    <text>Homodimer. The monomeric form is inactive while the homodimer is active.</text>
</comment>
<comment type="subcellular location">
    <subcellularLocation>
        <location evidence="3">Endoplasmic reticulum</location>
    </subcellularLocation>
    <subcellularLocation>
        <location evidence="3">Golgi apparatus</location>
    </subcellularLocation>
    <subcellularLocation>
        <location evidence="1">Lysosome</location>
    </subcellularLocation>
    <subcellularLocation>
        <location evidence="3">Secreted</location>
    </subcellularLocation>
    <text evidence="1">Secretion is stimulated by TSH/thyroid-stimulating hormone, INS/insulin and SST/somatostatin.</text>
</comment>
<comment type="tissue specificity">
    <text evidence="3">Mainly detected in blood plasma. Abundant in placenta and kidney. Present at low level in muscles, liver and skin fibroblasts. Not detected in brain or white blood cells (at protein level).</text>
</comment>
<comment type="induction">
    <text evidence="4">Up-regulated in the majority of hepatitis C virus-associated hepatocellular carcinoma.</text>
</comment>
<comment type="PTM">
    <text evidence="1">N-glycosylated. The secreted form is modified by hybrid or complex type oligosaccharide chains (By similarity).</text>
</comment>
<comment type="similarity">
    <text evidence="8">Belongs to the peptidase M28 family.</text>
</comment>
<comment type="sequence caution" evidence="8">
    <conflict type="frameshift">
        <sequence resource="EMBL-CDS" id="AAD31418"/>
    </conflict>
</comment>
<feature type="signal peptide" evidence="2">
    <location>
        <begin position="1"/>
        <end position="20"/>
    </location>
</feature>
<feature type="propeptide" id="PRO_5000055941" evidence="3 5">
    <location>
        <begin position="21"/>
        <end position="44"/>
    </location>
</feature>
<feature type="chain" id="PRO_5000055942" description="Carboxypeptidase Q">
    <location>
        <begin position="45"/>
        <end position="472"/>
    </location>
</feature>
<feature type="active site" description="Nucleophile" evidence="1">
    <location>
        <position position="336"/>
    </location>
</feature>
<feature type="binding site" evidence="1">
    <location>
        <position position="290"/>
    </location>
    <ligand>
        <name>Zn(2+)</name>
        <dbReference type="ChEBI" id="CHEBI:29105"/>
        <label>1</label>
    </ligand>
</feature>
<feature type="binding site" evidence="1">
    <location>
        <position position="302"/>
    </location>
    <ligand>
        <name>Zn(2+)</name>
        <dbReference type="ChEBI" id="CHEBI:29105"/>
        <label>1</label>
    </ligand>
</feature>
<feature type="binding site" evidence="1">
    <location>
        <position position="302"/>
    </location>
    <ligand>
        <name>Zn(2+)</name>
        <dbReference type="ChEBI" id="CHEBI:29105"/>
        <label>2</label>
        <note>catalytic</note>
    </ligand>
</feature>
<feature type="binding site" evidence="1">
    <location>
        <position position="337"/>
    </location>
    <ligand>
        <name>Zn(2+)</name>
        <dbReference type="ChEBI" id="CHEBI:29105"/>
        <label>2</label>
        <note>catalytic</note>
    </ligand>
</feature>
<feature type="binding site" evidence="1">
    <location>
        <position position="364"/>
    </location>
    <ligand>
        <name>Zn(2+)</name>
        <dbReference type="ChEBI" id="CHEBI:29105"/>
        <label>1</label>
    </ligand>
</feature>
<feature type="binding site" evidence="1">
    <location>
        <position position="434"/>
    </location>
    <ligand>
        <name>Zn(2+)</name>
        <dbReference type="ChEBI" id="CHEBI:29105"/>
        <label>2</label>
        <note>catalytic</note>
    </ligand>
</feature>
<feature type="glycosylation site" description="N-linked (GlcNAc...) asparagine" evidence="2">
    <location>
        <position position="61"/>
    </location>
</feature>
<feature type="glycosylation site" description="N-linked (GlcNAc...) asparagine" evidence="6 7">
    <location>
        <position position="179"/>
    </location>
</feature>
<feature type="glycosylation site" description="N-linked (GlcNAc...) asparagine" evidence="6">
    <location>
        <position position="353"/>
    </location>
</feature>
<feature type="glycosylation site" description="N-linked (GlcNAc...) asparagine" evidence="6">
    <location>
        <position position="356"/>
    </location>
</feature>
<feature type="glycosylation site" description="N-linked (GlcNAc...) asparagine" evidence="2">
    <location>
        <position position="396"/>
    </location>
</feature>
<feature type="sequence variant" id="VAR_037466" description="In dbSNP:rs34088584.">
    <original>S</original>
    <variation>N</variation>
    <location>
        <position position="138"/>
    </location>
</feature>
<feature type="sequence conflict" description="In Ref. 4; BAC11423." evidence="8" ref="4">
    <original>K</original>
    <variation>E</variation>
    <location>
        <position position="37"/>
    </location>
</feature>
<feature type="sequence conflict" description="In Ref. 4; BAC11423." evidence="8" ref="4">
    <original>E</original>
    <variation>G</variation>
    <location>
        <position position="117"/>
    </location>
</feature>
<feature type="sequence conflict" description="In Ref. 4; BAC11423." evidence="8" ref="4">
    <original>M</original>
    <variation>V</variation>
    <location>
        <position position="385"/>
    </location>
</feature>
<feature type="sequence conflict" description="In Ref. 1; AAD31418." evidence="8" ref="1">
    <original>K</original>
    <variation>Q</variation>
    <location>
        <position position="446"/>
    </location>
</feature>
<feature type="sequence conflict" description="In Ref. 1; AAD31418." evidence="8" ref="1">
    <original>N</original>
    <variation>D</variation>
    <location>
        <position position="449"/>
    </location>
</feature>
<dbReference type="EC" id="3.4.17.-"/>
<dbReference type="EMBL" id="AF119386">
    <property type="protein sequence ID" value="AAD31418.1"/>
    <property type="status" value="ALT_FRAME"/>
    <property type="molecule type" value="mRNA"/>
</dbReference>
<dbReference type="EMBL" id="AF107833">
    <property type="protein sequence ID" value="AAD43213.1"/>
    <property type="molecule type" value="mRNA"/>
</dbReference>
<dbReference type="EMBL" id="AF107834">
    <property type="protein sequence ID" value="AAD43214.1"/>
    <property type="molecule type" value="mRNA"/>
</dbReference>
<dbReference type="EMBL" id="AK075132">
    <property type="protein sequence ID" value="BAC11423.1"/>
    <property type="molecule type" value="mRNA"/>
</dbReference>
<dbReference type="EMBL" id="AK315447">
    <property type="protein sequence ID" value="BAG37835.1"/>
    <property type="molecule type" value="mRNA"/>
</dbReference>
<dbReference type="EMBL" id="CH471060">
    <property type="protein sequence ID" value="EAW91757.1"/>
    <property type="molecule type" value="Genomic_DNA"/>
</dbReference>
<dbReference type="EMBL" id="BC020689">
    <property type="protein sequence ID" value="AAH20689.1"/>
    <property type="molecule type" value="mRNA"/>
</dbReference>
<dbReference type="CCDS" id="CCDS6273.1"/>
<dbReference type="RefSeq" id="NP_057218.1">
    <property type="nucleotide sequence ID" value="NM_016134.4"/>
</dbReference>
<dbReference type="SMR" id="Q9Y646"/>
<dbReference type="BioGRID" id="115676">
    <property type="interactions" value="28"/>
</dbReference>
<dbReference type="FunCoup" id="Q9Y646">
    <property type="interactions" value="605"/>
</dbReference>
<dbReference type="IntAct" id="Q9Y646">
    <property type="interactions" value="19"/>
</dbReference>
<dbReference type="STRING" id="9606.ENSP00000220763"/>
<dbReference type="DrugBank" id="DB00142">
    <property type="generic name" value="Glutamic acid"/>
</dbReference>
<dbReference type="MEROPS" id="M28.014"/>
<dbReference type="GlyConnect" id="1069">
    <property type="glycosylation" value="6 N-Linked glycans (1 site)"/>
</dbReference>
<dbReference type="GlyCosmos" id="Q9Y646">
    <property type="glycosylation" value="5 sites, 6 glycans"/>
</dbReference>
<dbReference type="GlyGen" id="Q9Y646">
    <property type="glycosylation" value="6 sites, 83 N-linked glycans (2 sites), 1 O-linked glycan (1 site)"/>
</dbReference>
<dbReference type="iPTMnet" id="Q9Y646"/>
<dbReference type="MetOSite" id="Q9Y646"/>
<dbReference type="PhosphoSitePlus" id="Q9Y646"/>
<dbReference type="BioMuta" id="CPQ"/>
<dbReference type="DMDM" id="74735298"/>
<dbReference type="jPOST" id="Q9Y646"/>
<dbReference type="MassIVE" id="Q9Y646"/>
<dbReference type="PaxDb" id="9606-ENSP00000220763"/>
<dbReference type="PeptideAtlas" id="Q9Y646"/>
<dbReference type="ProteomicsDB" id="86599"/>
<dbReference type="Pumba" id="Q9Y646"/>
<dbReference type="Antibodypedia" id="12985">
    <property type="antibodies" value="120 antibodies from 26 providers"/>
</dbReference>
<dbReference type="DNASU" id="10404"/>
<dbReference type="Ensembl" id="ENST00000220763.10">
    <property type="protein sequence ID" value="ENSP00000220763.5"/>
    <property type="gene ID" value="ENSG00000104324.16"/>
</dbReference>
<dbReference type="GeneID" id="10404"/>
<dbReference type="KEGG" id="hsa:10404"/>
<dbReference type="MANE-Select" id="ENST00000220763.10">
    <property type="protein sequence ID" value="ENSP00000220763.5"/>
    <property type="RefSeq nucleotide sequence ID" value="NM_016134.4"/>
    <property type="RefSeq protein sequence ID" value="NP_057218.1"/>
</dbReference>
<dbReference type="UCSC" id="uc003yhw.5">
    <property type="organism name" value="human"/>
</dbReference>
<dbReference type="AGR" id="HGNC:16910"/>
<dbReference type="CTD" id="10404"/>
<dbReference type="DisGeNET" id="10404"/>
<dbReference type="GeneCards" id="CPQ"/>
<dbReference type="HGNC" id="HGNC:16910">
    <property type="gene designation" value="CPQ"/>
</dbReference>
<dbReference type="HPA" id="ENSG00000104324">
    <property type="expression patterns" value="Tissue enhanced (thyroid)"/>
</dbReference>
<dbReference type="MalaCards" id="CPQ"/>
<dbReference type="MIM" id="618754">
    <property type="type" value="gene"/>
</dbReference>
<dbReference type="neXtProt" id="NX_Q9Y646"/>
<dbReference type="OpenTargets" id="ENSG00000104324"/>
<dbReference type="VEuPathDB" id="HostDB:ENSG00000104324"/>
<dbReference type="eggNOG" id="KOG2195">
    <property type="taxonomic scope" value="Eukaryota"/>
</dbReference>
<dbReference type="GeneTree" id="ENSGT00390000018110"/>
<dbReference type="HOGENOM" id="CLU_033697_1_1_1"/>
<dbReference type="InParanoid" id="Q9Y646"/>
<dbReference type="OMA" id="IVFYNRP"/>
<dbReference type="OrthoDB" id="10013407at2759"/>
<dbReference type="PAN-GO" id="Q9Y646">
    <property type="GO annotations" value="5 GO annotations based on evolutionary models"/>
</dbReference>
<dbReference type="PhylomeDB" id="Q9Y646"/>
<dbReference type="TreeFam" id="TF323248"/>
<dbReference type="PathwayCommons" id="Q9Y646"/>
<dbReference type="BioGRID-ORCS" id="10404">
    <property type="hits" value="19 hits in 1155 CRISPR screens"/>
</dbReference>
<dbReference type="ChiTaRS" id="CPQ">
    <property type="organism name" value="human"/>
</dbReference>
<dbReference type="GenomeRNAi" id="10404"/>
<dbReference type="Pharos" id="Q9Y646">
    <property type="development level" value="Tbio"/>
</dbReference>
<dbReference type="PRO" id="PR:Q9Y646"/>
<dbReference type="Proteomes" id="UP000005640">
    <property type="component" value="Chromosome 8"/>
</dbReference>
<dbReference type="RNAct" id="Q9Y646">
    <property type="molecule type" value="protein"/>
</dbReference>
<dbReference type="Bgee" id="ENSG00000104324">
    <property type="expression patterns" value="Expressed in left lobe of thyroid gland and 210 other cell types or tissues"/>
</dbReference>
<dbReference type="ExpressionAtlas" id="Q9Y646">
    <property type="expression patterns" value="baseline and differential"/>
</dbReference>
<dbReference type="GO" id="GO:0005737">
    <property type="term" value="C:cytoplasm"/>
    <property type="evidence" value="ECO:0000314"/>
    <property type="project" value="UniProtKB"/>
</dbReference>
<dbReference type="GO" id="GO:0005783">
    <property type="term" value="C:endoplasmic reticulum"/>
    <property type="evidence" value="ECO:0000250"/>
    <property type="project" value="UniProtKB"/>
</dbReference>
<dbReference type="GO" id="GO:0070062">
    <property type="term" value="C:extracellular exosome"/>
    <property type="evidence" value="ECO:0007005"/>
    <property type="project" value="UniProtKB"/>
</dbReference>
<dbReference type="GO" id="GO:0005615">
    <property type="term" value="C:extracellular space"/>
    <property type="evidence" value="ECO:0000314"/>
    <property type="project" value="UniProtKB"/>
</dbReference>
<dbReference type="GO" id="GO:0005794">
    <property type="term" value="C:Golgi apparatus"/>
    <property type="evidence" value="ECO:0000314"/>
    <property type="project" value="HPA"/>
</dbReference>
<dbReference type="GO" id="GO:0043231">
    <property type="term" value="C:intracellular membrane-bounded organelle"/>
    <property type="evidence" value="ECO:0000314"/>
    <property type="project" value="HPA"/>
</dbReference>
<dbReference type="GO" id="GO:0005764">
    <property type="term" value="C:lysosome"/>
    <property type="evidence" value="ECO:0000250"/>
    <property type="project" value="UniProtKB"/>
</dbReference>
<dbReference type="GO" id="GO:0004180">
    <property type="term" value="F:carboxypeptidase activity"/>
    <property type="evidence" value="ECO:0007669"/>
    <property type="project" value="UniProtKB-KW"/>
</dbReference>
<dbReference type="GO" id="GO:0046872">
    <property type="term" value="F:metal ion binding"/>
    <property type="evidence" value="ECO:0007669"/>
    <property type="project" value="UniProtKB-KW"/>
</dbReference>
<dbReference type="GO" id="GO:0070573">
    <property type="term" value="F:metallodipeptidase activity"/>
    <property type="evidence" value="ECO:0000314"/>
    <property type="project" value="UniProtKB"/>
</dbReference>
<dbReference type="GO" id="GO:0042803">
    <property type="term" value="F:protein homodimerization activity"/>
    <property type="evidence" value="ECO:0000314"/>
    <property type="project" value="UniProtKB"/>
</dbReference>
<dbReference type="GO" id="GO:0043171">
    <property type="term" value="P:peptide catabolic process"/>
    <property type="evidence" value="ECO:0000314"/>
    <property type="project" value="UniProtKB"/>
</dbReference>
<dbReference type="GO" id="GO:0006508">
    <property type="term" value="P:proteolysis"/>
    <property type="evidence" value="ECO:0000314"/>
    <property type="project" value="UniProtKB"/>
</dbReference>
<dbReference type="GO" id="GO:0006590">
    <property type="term" value="P:thyroid hormone generation"/>
    <property type="evidence" value="ECO:0000250"/>
    <property type="project" value="UniProtKB"/>
</dbReference>
<dbReference type="GO" id="GO:0042246">
    <property type="term" value="P:tissue regeneration"/>
    <property type="evidence" value="ECO:0000250"/>
    <property type="project" value="UniProtKB"/>
</dbReference>
<dbReference type="CDD" id="cd03883">
    <property type="entry name" value="M28_Pgcp_like"/>
    <property type="match status" value="1"/>
</dbReference>
<dbReference type="FunFam" id="3.40.630.10:FF:000036">
    <property type="entry name" value="Carboxypeptidase Q"/>
    <property type="match status" value="1"/>
</dbReference>
<dbReference type="FunFam" id="3.40.630.10:FF:000112">
    <property type="entry name" value="Carboxypeptidase Q"/>
    <property type="match status" value="1"/>
</dbReference>
<dbReference type="FunFam" id="3.50.30.30:FF:000009">
    <property type="entry name" value="Carboxypeptidase Q"/>
    <property type="match status" value="1"/>
</dbReference>
<dbReference type="Gene3D" id="3.50.30.30">
    <property type="match status" value="1"/>
</dbReference>
<dbReference type="Gene3D" id="3.40.630.10">
    <property type="entry name" value="Zn peptidases"/>
    <property type="match status" value="1"/>
</dbReference>
<dbReference type="InterPro" id="IPR039866">
    <property type="entry name" value="CPQ"/>
</dbReference>
<dbReference type="InterPro" id="IPR007484">
    <property type="entry name" value="Peptidase_M28"/>
</dbReference>
<dbReference type="PANTHER" id="PTHR12053:SF3">
    <property type="entry name" value="CARBOXYPEPTIDASE Q"/>
    <property type="match status" value="1"/>
</dbReference>
<dbReference type="PANTHER" id="PTHR12053">
    <property type="entry name" value="PROTEASE FAMILY M28 PLASMA GLUTAMATE CARBOXYPEPTIDASE-RELATED"/>
    <property type="match status" value="1"/>
</dbReference>
<dbReference type="Pfam" id="PF04389">
    <property type="entry name" value="Peptidase_M28"/>
    <property type="match status" value="1"/>
</dbReference>
<dbReference type="SUPFAM" id="SSF53187">
    <property type="entry name" value="Zn-dependent exopeptidases"/>
    <property type="match status" value="1"/>
</dbReference>
<evidence type="ECO:0000250" key="1"/>
<evidence type="ECO:0000255" key="2"/>
<evidence type="ECO:0000269" key="3">
    <source>
    </source>
</evidence>
<evidence type="ECO:0000269" key="4">
    <source>
    </source>
</evidence>
<evidence type="ECO:0000269" key="5">
    <source>
    </source>
</evidence>
<evidence type="ECO:0000269" key="6">
    <source>
    </source>
</evidence>
<evidence type="ECO:0000269" key="7">
    <source>
    </source>
</evidence>
<evidence type="ECO:0000305" key="8"/>
<accession>Q9Y646</accession>
<accession>B2RD88</accession>
<accession>Q8NBZ1</accession>
<accession>Q9UNM8</accession>
<accession>Q9Y5X6</accession>
<proteinExistence type="evidence at protein level"/>